<accession>Q6C5D0</accession>
<name>CFD1_YARLI</name>
<evidence type="ECO:0000255" key="1">
    <source>
        <dbReference type="HAMAP-Rule" id="MF_03039"/>
    </source>
</evidence>
<evidence type="ECO:0000256" key="2">
    <source>
        <dbReference type="SAM" id="MobiDB-lite"/>
    </source>
</evidence>
<organism>
    <name type="scientific">Yarrowia lipolytica (strain CLIB 122 / E 150)</name>
    <name type="common">Yeast</name>
    <name type="synonym">Candida lipolytica</name>
    <dbReference type="NCBI Taxonomy" id="284591"/>
    <lineage>
        <taxon>Eukaryota</taxon>
        <taxon>Fungi</taxon>
        <taxon>Dikarya</taxon>
        <taxon>Ascomycota</taxon>
        <taxon>Saccharomycotina</taxon>
        <taxon>Dipodascomycetes</taxon>
        <taxon>Dipodascales</taxon>
        <taxon>Dipodascales incertae sedis</taxon>
        <taxon>Yarrowia</taxon>
    </lineage>
</organism>
<sequence length="291" mass="31495">MYSTATQSSPSLAGVKNIVLVLSGKGGVGKSSVTTQLALTLAAQGKKVGVLDIDLTGPSIPRFFGMEDKQVYQSSAGWVPVYTDASRNLCLMSLGFLLSSRGDSVVWRGPRKTAMIRQFIRDVVWGELDYLLIDTPPGTSDEHISIAEELRFCDQILGAVIVTTPQGVALADVRKELSFCKKIGFPILGIIENMSGYVCPHCSECQNIFSKGGGENLAKQYECKFLGTVPIDPKFVLMVENAKGGLQEIYGETDMAKIFAGICDKAFSEENEEEAKETAEEEKSRAATNGQ</sequence>
<reference key="1">
    <citation type="journal article" date="2004" name="Nature">
        <title>Genome evolution in yeasts.</title>
        <authorList>
            <person name="Dujon B."/>
            <person name="Sherman D."/>
            <person name="Fischer G."/>
            <person name="Durrens P."/>
            <person name="Casaregola S."/>
            <person name="Lafontaine I."/>
            <person name="de Montigny J."/>
            <person name="Marck C."/>
            <person name="Neuveglise C."/>
            <person name="Talla E."/>
            <person name="Goffard N."/>
            <person name="Frangeul L."/>
            <person name="Aigle M."/>
            <person name="Anthouard V."/>
            <person name="Babour A."/>
            <person name="Barbe V."/>
            <person name="Barnay S."/>
            <person name="Blanchin S."/>
            <person name="Beckerich J.-M."/>
            <person name="Beyne E."/>
            <person name="Bleykasten C."/>
            <person name="Boisrame A."/>
            <person name="Boyer J."/>
            <person name="Cattolico L."/>
            <person name="Confanioleri F."/>
            <person name="de Daruvar A."/>
            <person name="Despons L."/>
            <person name="Fabre E."/>
            <person name="Fairhead C."/>
            <person name="Ferry-Dumazet H."/>
            <person name="Groppi A."/>
            <person name="Hantraye F."/>
            <person name="Hennequin C."/>
            <person name="Jauniaux N."/>
            <person name="Joyet P."/>
            <person name="Kachouri R."/>
            <person name="Kerrest A."/>
            <person name="Koszul R."/>
            <person name="Lemaire M."/>
            <person name="Lesur I."/>
            <person name="Ma L."/>
            <person name="Muller H."/>
            <person name="Nicaud J.-M."/>
            <person name="Nikolski M."/>
            <person name="Oztas S."/>
            <person name="Ozier-Kalogeropoulos O."/>
            <person name="Pellenz S."/>
            <person name="Potier S."/>
            <person name="Richard G.-F."/>
            <person name="Straub M.-L."/>
            <person name="Suleau A."/>
            <person name="Swennen D."/>
            <person name="Tekaia F."/>
            <person name="Wesolowski-Louvel M."/>
            <person name="Westhof E."/>
            <person name="Wirth B."/>
            <person name="Zeniou-Meyer M."/>
            <person name="Zivanovic Y."/>
            <person name="Bolotin-Fukuhara M."/>
            <person name="Thierry A."/>
            <person name="Bouchier C."/>
            <person name="Caudron B."/>
            <person name="Scarpelli C."/>
            <person name="Gaillardin C."/>
            <person name="Weissenbach J."/>
            <person name="Wincker P."/>
            <person name="Souciet J.-L."/>
        </authorList>
    </citation>
    <scope>NUCLEOTIDE SEQUENCE [LARGE SCALE GENOMIC DNA]</scope>
    <source>
        <strain>CLIB 122 / E 150</strain>
    </source>
</reference>
<feature type="chain" id="PRO_0000278885" description="Cytosolic Fe-S cluster assembly factor CFD1">
    <location>
        <begin position="1"/>
        <end position="291"/>
    </location>
</feature>
<feature type="region of interest" description="Disordered" evidence="2">
    <location>
        <begin position="270"/>
        <end position="291"/>
    </location>
</feature>
<feature type="compositionally biased region" description="Basic and acidic residues" evidence="2">
    <location>
        <begin position="276"/>
        <end position="285"/>
    </location>
</feature>
<feature type="binding site" evidence="1">
    <location>
        <begin position="24"/>
        <end position="31"/>
    </location>
    <ligand>
        <name>ATP</name>
        <dbReference type="ChEBI" id="CHEBI:30616"/>
    </ligand>
</feature>
<feature type="binding site" evidence="1">
    <location>
        <position position="199"/>
    </location>
    <ligand>
        <name>[4Fe-4S] cluster</name>
        <dbReference type="ChEBI" id="CHEBI:49883"/>
        <note>ligand shared between dimeric partners</note>
    </ligand>
</feature>
<feature type="binding site" evidence="1">
    <location>
        <position position="202"/>
    </location>
    <ligand>
        <name>[4Fe-4S] cluster</name>
        <dbReference type="ChEBI" id="CHEBI:49883"/>
        <note>ligand shared between dimeric partners</note>
    </ligand>
</feature>
<protein>
    <recommendedName>
        <fullName evidence="1">Cytosolic Fe-S cluster assembly factor CFD1</fullName>
    </recommendedName>
    <alternativeName>
        <fullName evidence="1">Cytosolic Fe-S cluster-deficient protein 1</fullName>
    </alternativeName>
</protein>
<comment type="function">
    <text evidence="1">Component of the cytosolic iron-sulfur (Fe/S) protein assembly (CIA) machinery. Required for maturation of extramitochondrial Fe-S proteins. The NBP35-CFD1 heterotetramer forms a Fe-S scaffold complex, mediating the de novo assembly of an Fe-S cluster and its transfer to target apoproteins. Required for biogenesis and export of both ribosomal subunits, which may reflect a role in assembly of the Fe/S clusters in RLI1, a protein which performs rRNA processing and ribosome export.</text>
</comment>
<comment type="cofactor">
    <cofactor evidence="1">
        <name>[4Fe-4S] cluster</name>
        <dbReference type="ChEBI" id="CHEBI:49883"/>
    </cofactor>
    <text evidence="1">Binds 4 [4Fe-4S] clusters per heterotetramer. Contains two stable clusters in the N-termini of NBP35 and two labile, bridging clusters between subunits of the NBP35-CFD1 heterotetramer.</text>
</comment>
<comment type="subunit">
    <text evidence="1">Heterotetramer of 2 NBP35 and 2 CFD1 chains.</text>
</comment>
<comment type="subcellular location">
    <subcellularLocation>
        <location evidence="1">Cytoplasm</location>
    </subcellularLocation>
</comment>
<comment type="similarity">
    <text evidence="1">Belongs to the Mrp/NBP35 ATP-binding proteins family. NUBP2/CFD1 subfamily.</text>
</comment>
<dbReference type="EMBL" id="CR382131">
    <property type="protein sequence ID" value="CAG79727.1"/>
    <property type="molecule type" value="Genomic_DNA"/>
</dbReference>
<dbReference type="RefSeq" id="XP_504132.1">
    <property type="nucleotide sequence ID" value="XM_504132.1"/>
</dbReference>
<dbReference type="SMR" id="Q6C5D0"/>
<dbReference type="FunCoup" id="Q6C5D0">
    <property type="interactions" value="157"/>
</dbReference>
<dbReference type="STRING" id="284591.Q6C5D0"/>
<dbReference type="EnsemblFungi" id="CAG79727">
    <property type="protein sequence ID" value="CAG79727"/>
    <property type="gene ID" value="YALI0_E19074g"/>
</dbReference>
<dbReference type="KEGG" id="yli:2911744"/>
<dbReference type="VEuPathDB" id="FungiDB:YALI0_E19074g"/>
<dbReference type="HOGENOM" id="CLU_024839_0_1_1"/>
<dbReference type="InParanoid" id="Q6C5D0"/>
<dbReference type="OMA" id="WIPVFAD"/>
<dbReference type="OrthoDB" id="111766at4891"/>
<dbReference type="Proteomes" id="UP000001300">
    <property type="component" value="Chromosome E"/>
</dbReference>
<dbReference type="GO" id="GO:0005829">
    <property type="term" value="C:cytosol"/>
    <property type="evidence" value="ECO:0000318"/>
    <property type="project" value="GO_Central"/>
</dbReference>
<dbReference type="GO" id="GO:0051539">
    <property type="term" value="F:4 iron, 4 sulfur cluster binding"/>
    <property type="evidence" value="ECO:0007669"/>
    <property type="project" value="UniProtKB-UniRule"/>
</dbReference>
<dbReference type="GO" id="GO:0005524">
    <property type="term" value="F:ATP binding"/>
    <property type="evidence" value="ECO:0007669"/>
    <property type="project" value="UniProtKB-KW"/>
</dbReference>
<dbReference type="GO" id="GO:0140663">
    <property type="term" value="F:ATP-dependent FeS chaperone activity"/>
    <property type="evidence" value="ECO:0007669"/>
    <property type="project" value="InterPro"/>
</dbReference>
<dbReference type="GO" id="GO:0051536">
    <property type="term" value="F:iron-sulfur cluster binding"/>
    <property type="evidence" value="ECO:0000318"/>
    <property type="project" value="GO_Central"/>
</dbReference>
<dbReference type="GO" id="GO:0046872">
    <property type="term" value="F:metal ion binding"/>
    <property type="evidence" value="ECO:0007669"/>
    <property type="project" value="UniProtKB-KW"/>
</dbReference>
<dbReference type="GO" id="GO:0016226">
    <property type="term" value="P:iron-sulfur cluster assembly"/>
    <property type="evidence" value="ECO:0000318"/>
    <property type="project" value="GO_Central"/>
</dbReference>
<dbReference type="CDD" id="cd02037">
    <property type="entry name" value="Mrp_NBP35"/>
    <property type="match status" value="1"/>
</dbReference>
<dbReference type="FunFam" id="3.40.50.300:FF:000796">
    <property type="entry name" value="Cytosolic Fe-S cluster assembly factor NUBP2"/>
    <property type="match status" value="1"/>
</dbReference>
<dbReference type="Gene3D" id="3.40.50.300">
    <property type="entry name" value="P-loop containing nucleotide triphosphate hydrolases"/>
    <property type="match status" value="1"/>
</dbReference>
<dbReference type="HAMAP" id="MF_02040">
    <property type="entry name" value="Mrp_NBP35"/>
    <property type="match status" value="1"/>
</dbReference>
<dbReference type="HAMAP" id="MF_03039">
    <property type="entry name" value="NUBP2"/>
    <property type="match status" value="1"/>
</dbReference>
<dbReference type="InterPro" id="IPR000808">
    <property type="entry name" value="Mrp-like_CS"/>
</dbReference>
<dbReference type="InterPro" id="IPR019591">
    <property type="entry name" value="Mrp/NBP35_ATP-bd"/>
</dbReference>
<dbReference type="InterPro" id="IPR028600">
    <property type="entry name" value="NUBP2/Cfd1_eukaryotes"/>
</dbReference>
<dbReference type="InterPro" id="IPR027417">
    <property type="entry name" value="P-loop_NTPase"/>
</dbReference>
<dbReference type="InterPro" id="IPR033756">
    <property type="entry name" value="YlxH/NBP35"/>
</dbReference>
<dbReference type="PANTHER" id="PTHR23264:SF19">
    <property type="entry name" value="CYTOSOLIC FE-S CLUSTER ASSEMBLY FACTOR NUBP2"/>
    <property type="match status" value="1"/>
</dbReference>
<dbReference type="PANTHER" id="PTHR23264">
    <property type="entry name" value="NUCLEOTIDE-BINDING PROTEIN NBP35 YEAST -RELATED"/>
    <property type="match status" value="1"/>
</dbReference>
<dbReference type="Pfam" id="PF10609">
    <property type="entry name" value="ParA"/>
    <property type="match status" value="1"/>
</dbReference>
<dbReference type="SUPFAM" id="SSF52540">
    <property type="entry name" value="P-loop containing nucleoside triphosphate hydrolases"/>
    <property type="match status" value="1"/>
</dbReference>
<dbReference type="PROSITE" id="PS01215">
    <property type="entry name" value="MRP"/>
    <property type="match status" value="1"/>
</dbReference>
<keyword id="KW-0004">4Fe-4S</keyword>
<keyword id="KW-0067">ATP-binding</keyword>
<keyword id="KW-0963">Cytoplasm</keyword>
<keyword id="KW-0408">Iron</keyword>
<keyword id="KW-0411">Iron-sulfur</keyword>
<keyword id="KW-0479">Metal-binding</keyword>
<keyword id="KW-0547">Nucleotide-binding</keyword>
<keyword id="KW-1185">Reference proteome</keyword>
<proteinExistence type="inferred from homology"/>
<gene>
    <name evidence="1" type="primary">CFD1</name>
    <name type="ordered locus">YALI0E19074g</name>
</gene>